<sequence length="464" mass="48465">MISIAFKHYGFYSPSSNEILETIQMVRMEHLDIRTVTMGISLRDCSHPDPEVFNENIYEKITSRAKELIRTTNEIQSLYGIPIINRRISVTPISIAAESCRSQDFVSVAKTMDEAAKEAGVDFIGGFSALVHKGETRGDLKLINSIPEALASTEKVCSSVNVATTKAGINMDAVGLMGKVIKKTAELTAERDGIGCAKLVVFANAPEDNPFMAGAFHGIGEPECVINVGVSGPGAVNTAVCELENPNLTEISETIKKTAFKITRMGEMVGKEVSRRLGVEFGILDLSLAPTPAIGDSVAAILEAMGLERCGTHGTTAALALLNDAVKKGGAMASSSVGGLSGAFIPVSEDAGMIEAVKAGSLTLEKLEAMTSVCSVGLDMIAVPGDTSAATLSAIIADEMAVGVINKKTTAVRIIPAPGKAVGDSVEFGGLLGSAPIMPVSSFSSETFVNRGGRIPAPIQSLTN</sequence>
<dbReference type="EMBL" id="AE010299">
    <property type="protein sequence ID" value="AAM05098.1"/>
    <property type="molecule type" value="Genomic_DNA"/>
</dbReference>
<dbReference type="RefSeq" id="WP_011021695.1">
    <property type="nucleotide sequence ID" value="NC_003552.1"/>
</dbReference>
<dbReference type="SMR" id="Q8TQ61"/>
<dbReference type="STRING" id="188937.MA_1691"/>
<dbReference type="EnsemblBacteria" id="AAM05098">
    <property type="protein sequence ID" value="AAM05098"/>
    <property type="gene ID" value="MA_1691"/>
</dbReference>
<dbReference type="GeneID" id="1473579"/>
<dbReference type="KEGG" id="mac:MA_1691"/>
<dbReference type="HOGENOM" id="CLU_048704_0_0_2"/>
<dbReference type="InParanoid" id="Q8TQ61"/>
<dbReference type="OrthoDB" id="21376at2157"/>
<dbReference type="PhylomeDB" id="Q8TQ61"/>
<dbReference type="Proteomes" id="UP000002487">
    <property type="component" value="Chromosome"/>
</dbReference>
<dbReference type="CDD" id="cd08025">
    <property type="entry name" value="RNR_PFL_like_DUF711"/>
    <property type="match status" value="1"/>
</dbReference>
<dbReference type="Gene3D" id="3.20.70.20">
    <property type="match status" value="1"/>
</dbReference>
<dbReference type="HAMAP" id="MF_01221">
    <property type="entry name" value="UPF0210"/>
    <property type="match status" value="1"/>
</dbReference>
<dbReference type="InterPro" id="IPR007841">
    <property type="entry name" value="UPF0210"/>
</dbReference>
<dbReference type="NCBIfam" id="NF003700">
    <property type="entry name" value="PRK05313.1"/>
    <property type="match status" value="1"/>
</dbReference>
<dbReference type="PANTHER" id="PTHR37560:SF1">
    <property type="entry name" value="UPF0210 PROTEIN MJ1665"/>
    <property type="match status" value="1"/>
</dbReference>
<dbReference type="PANTHER" id="PTHR37560">
    <property type="entry name" value="UPF0210 PROTEIN SPR0218"/>
    <property type="match status" value="1"/>
</dbReference>
<dbReference type="Pfam" id="PF05167">
    <property type="entry name" value="DUF711"/>
    <property type="match status" value="1"/>
</dbReference>
<dbReference type="SUPFAM" id="SSF51998">
    <property type="entry name" value="PFL-like glycyl radical enzymes"/>
    <property type="match status" value="1"/>
</dbReference>
<evidence type="ECO:0000255" key="1">
    <source>
        <dbReference type="HAMAP-Rule" id="MF_01221"/>
    </source>
</evidence>
<feature type="chain" id="PRO_0000070563" description="UPF0210 protein MA_1691">
    <location>
        <begin position="1"/>
        <end position="464"/>
    </location>
</feature>
<name>Y1691_METAC</name>
<reference key="1">
    <citation type="journal article" date="2002" name="Genome Res.">
        <title>The genome of Methanosarcina acetivorans reveals extensive metabolic and physiological diversity.</title>
        <authorList>
            <person name="Galagan J.E."/>
            <person name="Nusbaum C."/>
            <person name="Roy A."/>
            <person name="Endrizzi M.G."/>
            <person name="Macdonald P."/>
            <person name="FitzHugh W."/>
            <person name="Calvo S."/>
            <person name="Engels R."/>
            <person name="Smirnov S."/>
            <person name="Atnoor D."/>
            <person name="Brown A."/>
            <person name="Allen N."/>
            <person name="Naylor J."/>
            <person name="Stange-Thomann N."/>
            <person name="DeArellano K."/>
            <person name="Johnson R."/>
            <person name="Linton L."/>
            <person name="McEwan P."/>
            <person name="McKernan K."/>
            <person name="Talamas J."/>
            <person name="Tirrell A."/>
            <person name="Ye W."/>
            <person name="Zimmer A."/>
            <person name="Barber R.D."/>
            <person name="Cann I."/>
            <person name="Graham D.E."/>
            <person name="Grahame D.A."/>
            <person name="Guss A.M."/>
            <person name="Hedderich R."/>
            <person name="Ingram-Smith C."/>
            <person name="Kuettner H.C."/>
            <person name="Krzycki J.A."/>
            <person name="Leigh J.A."/>
            <person name="Li W."/>
            <person name="Liu J."/>
            <person name="Mukhopadhyay B."/>
            <person name="Reeve J.N."/>
            <person name="Smith K."/>
            <person name="Springer T.A."/>
            <person name="Umayam L.A."/>
            <person name="White O."/>
            <person name="White R.H."/>
            <person name="de Macario E.C."/>
            <person name="Ferry J.G."/>
            <person name="Jarrell K.F."/>
            <person name="Jing H."/>
            <person name="Macario A.J.L."/>
            <person name="Paulsen I.T."/>
            <person name="Pritchett M."/>
            <person name="Sowers K.R."/>
            <person name="Swanson R.V."/>
            <person name="Zinder S.H."/>
            <person name="Lander E."/>
            <person name="Metcalf W.W."/>
            <person name="Birren B."/>
        </authorList>
    </citation>
    <scope>NUCLEOTIDE SEQUENCE [LARGE SCALE GENOMIC DNA]</scope>
    <source>
        <strain>ATCC 35395 / DSM 2834 / JCM 12185 / C2A</strain>
    </source>
</reference>
<organism>
    <name type="scientific">Methanosarcina acetivorans (strain ATCC 35395 / DSM 2834 / JCM 12185 / C2A)</name>
    <dbReference type="NCBI Taxonomy" id="188937"/>
    <lineage>
        <taxon>Archaea</taxon>
        <taxon>Methanobacteriati</taxon>
        <taxon>Methanobacteriota</taxon>
        <taxon>Stenosarchaea group</taxon>
        <taxon>Methanomicrobia</taxon>
        <taxon>Methanosarcinales</taxon>
        <taxon>Methanosarcinaceae</taxon>
        <taxon>Methanosarcina</taxon>
    </lineage>
</organism>
<proteinExistence type="inferred from homology"/>
<accession>Q8TQ61</accession>
<gene>
    <name type="ordered locus">MA_1691</name>
</gene>
<protein>
    <recommendedName>
        <fullName evidence="1">UPF0210 protein MA_1691</fullName>
    </recommendedName>
</protein>
<comment type="similarity">
    <text evidence="1">Belongs to the UPF0210 family.</text>
</comment>
<keyword id="KW-1185">Reference proteome</keyword>